<evidence type="ECO:0000250" key="1">
    <source>
        <dbReference type="UniProtKB" id="O34206"/>
    </source>
</evidence>
<evidence type="ECO:0000250" key="2">
    <source>
        <dbReference type="UniProtKB" id="Q2G2U4"/>
    </source>
</evidence>
<evidence type="ECO:0000255" key="3"/>
<evidence type="ECO:0000255" key="4">
    <source>
        <dbReference type="PROSITE-ProRule" id="PRU00102"/>
    </source>
</evidence>
<evidence type="ECO:0000255" key="5">
    <source>
        <dbReference type="PROSITE-ProRule" id="PRU00107"/>
    </source>
</evidence>
<evidence type="ECO:0000255" key="6">
    <source>
        <dbReference type="PROSITE-ProRule" id="PRU00140"/>
    </source>
</evidence>
<evidence type="ECO:0000255" key="7">
    <source>
        <dbReference type="PROSITE-ProRule" id="PRU00141"/>
    </source>
</evidence>
<evidence type="ECO:0000305" key="8"/>
<proteinExistence type="inferred from homology"/>
<gene>
    <name type="primary">walK</name>
    <name type="synonym">vicK</name>
    <name type="ordered locus">SH0018</name>
</gene>
<dbReference type="EC" id="2.7.13.3" evidence="1"/>
<dbReference type="EMBL" id="AP006716">
    <property type="protein sequence ID" value="BAE03327.1"/>
    <property type="molecule type" value="Genomic_DNA"/>
</dbReference>
<dbReference type="RefSeq" id="WP_011274376.1">
    <property type="nucleotide sequence ID" value="NC_007168.1"/>
</dbReference>
<dbReference type="SMR" id="Q4LAJ8"/>
<dbReference type="KEGG" id="sha:SH0018"/>
<dbReference type="eggNOG" id="COG5002">
    <property type="taxonomic scope" value="Bacteria"/>
</dbReference>
<dbReference type="HOGENOM" id="CLU_000445_89_2_9"/>
<dbReference type="OrthoDB" id="9813151at2"/>
<dbReference type="Proteomes" id="UP000000543">
    <property type="component" value="Chromosome"/>
</dbReference>
<dbReference type="GO" id="GO:0005886">
    <property type="term" value="C:plasma membrane"/>
    <property type="evidence" value="ECO:0007669"/>
    <property type="project" value="UniProtKB-SubCell"/>
</dbReference>
<dbReference type="GO" id="GO:0005524">
    <property type="term" value="F:ATP binding"/>
    <property type="evidence" value="ECO:0007669"/>
    <property type="project" value="UniProtKB-KW"/>
</dbReference>
<dbReference type="GO" id="GO:0000156">
    <property type="term" value="F:phosphorelay response regulator activity"/>
    <property type="evidence" value="ECO:0007669"/>
    <property type="project" value="TreeGrafter"/>
</dbReference>
<dbReference type="GO" id="GO:0000155">
    <property type="term" value="F:phosphorelay sensor kinase activity"/>
    <property type="evidence" value="ECO:0007669"/>
    <property type="project" value="InterPro"/>
</dbReference>
<dbReference type="GO" id="GO:0030295">
    <property type="term" value="F:protein kinase activator activity"/>
    <property type="evidence" value="ECO:0007669"/>
    <property type="project" value="TreeGrafter"/>
</dbReference>
<dbReference type="GO" id="GO:0007234">
    <property type="term" value="P:osmosensory signaling via phosphorelay pathway"/>
    <property type="evidence" value="ECO:0007669"/>
    <property type="project" value="TreeGrafter"/>
</dbReference>
<dbReference type="GO" id="GO:0006355">
    <property type="term" value="P:regulation of DNA-templated transcription"/>
    <property type="evidence" value="ECO:0007669"/>
    <property type="project" value="InterPro"/>
</dbReference>
<dbReference type="CDD" id="cd06225">
    <property type="entry name" value="HAMP"/>
    <property type="match status" value="1"/>
</dbReference>
<dbReference type="CDD" id="cd00075">
    <property type="entry name" value="HATPase"/>
    <property type="match status" value="1"/>
</dbReference>
<dbReference type="CDD" id="cd00082">
    <property type="entry name" value="HisKA"/>
    <property type="match status" value="1"/>
</dbReference>
<dbReference type="CDD" id="cd00130">
    <property type="entry name" value="PAS"/>
    <property type="match status" value="1"/>
</dbReference>
<dbReference type="FunFam" id="1.10.8.500:FF:000001">
    <property type="entry name" value="Cell wall metabolism sensor histidine kinase"/>
    <property type="match status" value="1"/>
</dbReference>
<dbReference type="FunFam" id="3.30.565.10:FF:000006">
    <property type="entry name" value="Sensor histidine kinase WalK"/>
    <property type="match status" value="1"/>
</dbReference>
<dbReference type="FunFam" id="1.10.287.130:FF:000001">
    <property type="entry name" value="Two-component sensor histidine kinase"/>
    <property type="match status" value="1"/>
</dbReference>
<dbReference type="Gene3D" id="1.10.287.130">
    <property type="match status" value="1"/>
</dbReference>
<dbReference type="Gene3D" id="1.10.8.500">
    <property type="entry name" value="HAMP domain in histidine kinase"/>
    <property type="match status" value="1"/>
</dbReference>
<dbReference type="Gene3D" id="3.30.565.10">
    <property type="entry name" value="Histidine kinase-like ATPase, C-terminal domain"/>
    <property type="match status" value="1"/>
</dbReference>
<dbReference type="Gene3D" id="3.30.450.20">
    <property type="entry name" value="PAS domain"/>
    <property type="match status" value="2"/>
</dbReference>
<dbReference type="InterPro" id="IPR003660">
    <property type="entry name" value="HAMP_dom"/>
</dbReference>
<dbReference type="InterPro" id="IPR036890">
    <property type="entry name" value="HATPase_C_sf"/>
</dbReference>
<dbReference type="InterPro" id="IPR005467">
    <property type="entry name" value="His_kinase_dom"/>
</dbReference>
<dbReference type="InterPro" id="IPR003661">
    <property type="entry name" value="HisK_dim/P_dom"/>
</dbReference>
<dbReference type="InterPro" id="IPR036097">
    <property type="entry name" value="HisK_dim/P_sf"/>
</dbReference>
<dbReference type="InterPro" id="IPR052545">
    <property type="entry name" value="Light-responsive_reg"/>
</dbReference>
<dbReference type="InterPro" id="IPR000014">
    <property type="entry name" value="PAS"/>
</dbReference>
<dbReference type="InterPro" id="IPR000700">
    <property type="entry name" value="PAS-assoc_C"/>
</dbReference>
<dbReference type="InterPro" id="IPR035965">
    <property type="entry name" value="PAS-like_dom_sf"/>
</dbReference>
<dbReference type="InterPro" id="IPR013767">
    <property type="entry name" value="PAS_fold"/>
</dbReference>
<dbReference type="InterPro" id="IPR049814">
    <property type="entry name" value="Resp_reg_WalK"/>
</dbReference>
<dbReference type="InterPro" id="IPR029151">
    <property type="entry name" value="Sensor-like_sf"/>
</dbReference>
<dbReference type="InterPro" id="IPR004358">
    <property type="entry name" value="Sig_transdc_His_kin-like_C"/>
</dbReference>
<dbReference type="NCBIfam" id="NF033092">
    <property type="entry name" value="HK_WalK"/>
    <property type="match status" value="1"/>
</dbReference>
<dbReference type="NCBIfam" id="TIGR00229">
    <property type="entry name" value="sensory_box"/>
    <property type="match status" value="1"/>
</dbReference>
<dbReference type="PANTHER" id="PTHR42878:SF7">
    <property type="entry name" value="SENSOR HISTIDINE KINASE GLRK"/>
    <property type="match status" value="1"/>
</dbReference>
<dbReference type="PANTHER" id="PTHR42878">
    <property type="entry name" value="TWO-COMPONENT HISTIDINE KINASE"/>
    <property type="match status" value="1"/>
</dbReference>
<dbReference type="Pfam" id="PF23846">
    <property type="entry name" value="Cache_WalK"/>
    <property type="match status" value="1"/>
</dbReference>
<dbReference type="Pfam" id="PF00672">
    <property type="entry name" value="HAMP"/>
    <property type="match status" value="1"/>
</dbReference>
<dbReference type="Pfam" id="PF02518">
    <property type="entry name" value="HATPase_c"/>
    <property type="match status" value="1"/>
</dbReference>
<dbReference type="Pfam" id="PF00512">
    <property type="entry name" value="HisKA"/>
    <property type="match status" value="1"/>
</dbReference>
<dbReference type="Pfam" id="PF00989">
    <property type="entry name" value="PAS"/>
    <property type="match status" value="1"/>
</dbReference>
<dbReference type="PRINTS" id="PR00344">
    <property type="entry name" value="BCTRLSENSOR"/>
</dbReference>
<dbReference type="SMART" id="SM00304">
    <property type="entry name" value="HAMP"/>
    <property type="match status" value="1"/>
</dbReference>
<dbReference type="SMART" id="SM00387">
    <property type="entry name" value="HATPase_c"/>
    <property type="match status" value="1"/>
</dbReference>
<dbReference type="SMART" id="SM00388">
    <property type="entry name" value="HisKA"/>
    <property type="match status" value="1"/>
</dbReference>
<dbReference type="SMART" id="SM00091">
    <property type="entry name" value="PAS"/>
    <property type="match status" value="1"/>
</dbReference>
<dbReference type="SUPFAM" id="SSF55874">
    <property type="entry name" value="ATPase domain of HSP90 chaperone/DNA topoisomerase II/histidine kinase"/>
    <property type="match status" value="1"/>
</dbReference>
<dbReference type="SUPFAM" id="SSF158472">
    <property type="entry name" value="HAMP domain-like"/>
    <property type="match status" value="1"/>
</dbReference>
<dbReference type="SUPFAM" id="SSF47384">
    <property type="entry name" value="Homodimeric domain of signal transducing histidine kinase"/>
    <property type="match status" value="1"/>
</dbReference>
<dbReference type="SUPFAM" id="SSF55785">
    <property type="entry name" value="PYP-like sensor domain (PAS domain)"/>
    <property type="match status" value="1"/>
</dbReference>
<dbReference type="SUPFAM" id="SSF103190">
    <property type="entry name" value="Sensory domain-like"/>
    <property type="match status" value="1"/>
</dbReference>
<dbReference type="PROSITE" id="PS50885">
    <property type="entry name" value="HAMP"/>
    <property type="match status" value="1"/>
</dbReference>
<dbReference type="PROSITE" id="PS50109">
    <property type="entry name" value="HIS_KIN"/>
    <property type="match status" value="1"/>
</dbReference>
<dbReference type="PROSITE" id="PS50113">
    <property type="entry name" value="PAC"/>
    <property type="match status" value="1"/>
</dbReference>
<dbReference type="PROSITE" id="PS50112">
    <property type="entry name" value="PAS"/>
    <property type="match status" value="1"/>
</dbReference>
<keyword id="KW-0067">ATP-binding</keyword>
<keyword id="KW-1003">Cell membrane</keyword>
<keyword id="KW-0418">Kinase</keyword>
<keyword id="KW-0472">Membrane</keyword>
<keyword id="KW-0547">Nucleotide-binding</keyword>
<keyword id="KW-0597">Phosphoprotein</keyword>
<keyword id="KW-0808">Transferase</keyword>
<keyword id="KW-0812">Transmembrane</keyword>
<keyword id="KW-1133">Transmembrane helix</keyword>
<keyword id="KW-0902">Two-component regulatory system</keyword>
<sequence length="608" mass="69926">MKWLKQLQSLHTKLVIVYVLLIIIGMQIIGLYFTNSLEKELTNNFMKNIKQYATQLEVNIERIYRDDPSNAQKEVQSLLNEYANRQEIEEIRFIDKDQIIMATAKISSHNMINQKVNDNSVQKALSLGESNSHNVLKDYGSGKERIWIYNLPVKNGNETIGNIYIESNINDVYNQLNNINQIFIIGTAISLFITVILGFFIARTITRPITDMRNQTVEMSKGNYTQRVKIYGNDEIGELALAFNNLSKRVQEAQANTESEKRRLDSVITHMSDGIIATDRRGRVRIVNDMAIKMLGMSKEDLIGYYMLSVLNLEDEFSLDEIQENNDSFLLDINEDEGIIARVNFSTIVQETGFVTGYIAVLHDVTEQQQVERERREFVANVSHELRTPLTSMNSYIEALEEGVWKDDNLAPSFLSVTREETERMIRLVNDLLQLSKMDNESEQITKEIVDFNMFINKIINRHEMAAKDTTFVREIPSETIFTEIDPDKMTQVFDNVITNAMKYSRGEKRVEFHVKQNALYNRMTIRIKDNGIGIPINKVDKIFDRFYRVDKARTRKMGGTGLGLAISKEIVEAHNGRIWANSVEGQGTSIFITLPCEVIDDGDWDEE</sequence>
<organism>
    <name type="scientific">Staphylococcus haemolyticus (strain JCSC1435)</name>
    <dbReference type="NCBI Taxonomy" id="279808"/>
    <lineage>
        <taxon>Bacteria</taxon>
        <taxon>Bacillati</taxon>
        <taxon>Bacillota</taxon>
        <taxon>Bacilli</taxon>
        <taxon>Bacillales</taxon>
        <taxon>Staphylococcaceae</taxon>
        <taxon>Staphylococcus</taxon>
    </lineage>
</organism>
<comment type="function">
    <text evidence="2">Member of the two-component regulatory system WalK/WalR. WalK functions as a sensor protein kinase which is autophosphorylated at a histidine residue and transfers its phosphate group to WalR.</text>
</comment>
<comment type="catalytic activity">
    <reaction evidence="1">
        <text>ATP + protein L-histidine = ADP + protein N-phospho-L-histidine.</text>
        <dbReference type="EC" id="2.7.13.3"/>
    </reaction>
</comment>
<comment type="subcellular location">
    <subcellularLocation>
        <location evidence="8">Cell membrane</location>
        <topology evidence="3">Multi-pass membrane protein</topology>
    </subcellularLocation>
</comment>
<comment type="PTM">
    <text evidence="2">Autophosphorylated.</text>
</comment>
<reference key="1">
    <citation type="journal article" date="2005" name="J. Bacteriol.">
        <title>Whole-genome sequencing of Staphylococcus haemolyticus uncovers the extreme plasticity of its genome and the evolution of human-colonizing staphylococcal species.</title>
        <authorList>
            <person name="Takeuchi F."/>
            <person name="Watanabe S."/>
            <person name="Baba T."/>
            <person name="Yuzawa H."/>
            <person name="Ito T."/>
            <person name="Morimoto Y."/>
            <person name="Kuroda M."/>
            <person name="Cui L."/>
            <person name="Takahashi M."/>
            <person name="Ankai A."/>
            <person name="Baba S."/>
            <person name="Fukui S."/>
            <person name="Lee J.C."/>
            <person name="Hiramatsu K."/>
        </authorList>
    </citation>
    <scope>NUCLEOTIDE SEQUENCE [LARGE SCALE GENOMIC DNA]</scope>
    <source>
        <strain>JCSC1435</strain>
    </source>
</reference>
<feature type="chain" id="PRO_0000353067" description="Sensor protein kinase WalK">
    <location>
        <begin position="1"/>
        <end position="608"/>
    </location>
</feature>
<feature type="transmembrane region" description="Helical" evidence="3">
    <location>
        <begin position="14"/>
        <end position="34"/>
    </location>
</feature>
<feature type="transmembrane region" description="Helical" evidence="3">
    <location>
        <begin position="182"/>
        <end position="202"/>
    </location>
</feature>
<feature type="domain" description="HAMP" evidence="4">
    <location>
        <begin position="203"/>
        <end position="255"/>
    </location>
</feature>
<feature type="domain" description="PAS" evidence="6">
    <location>
        <begin position="260"/>
        <end position="330"/>
    </location>
</feature>
<feature type="domain" description="PAC" evidence="7">
    <location>
        <begin position="324"/>
        <end position="377"/>
    </location>
</feature>
<feature type="domain" description="Histidine kinase" evidence="5">
    <location>
        <begin position="381"/>
        <end position="599"/>
    </location>
</feature>
<feature type="modified residue" description="Phosphohistidine; by autocatalysis" evidence="5">
    <location>
        <position position="384"/>
    </location>
</feature>
<protein>
    <recommendedName>
        <fullName evidence="8">Sensor protein kinase WalK</fullName>
        <ecNumber evidence="1">2.7.13.3</ecNumber>
    </recommendedName>
</protein>
<accession>Q4LAJ8</accession>
<name>WALK_STAHJ</name>